<gene>
    <name evidence="1" type="primary">sotB</name>
    <name type="ordered locus">PputGB1_2073</name>
</gene>
<proteinExistence type="inferred from homology"/>
<name>SOTB_PSEPG</name>
<dbReference type="EMBL" id="CP000926">
    <property type="protein sequence ID" value="ABY97974.1"/>
    <property type="molecule type" value="Genomic_DNA"/>
</dbReference>
<dbReference type="RefSeq" id="WP_012271725.1">
    <property type="nucleotide sequence ID" value="NC_010322.1"/>
</dbReference>
<dbReference type="SMR" id="B0KLJ7"/>
<dbReference type="KEGG" id="ppg:PputGB1_2073"/>
<dbReference type="eggNOG" id="COG2814">
    <property type="taxonomic scope" value="Bacteria"/>
</dbReference>
<dbReference type="HOGENOM" id="CLU_001265_61_1_6"/>
<dbReference type="Proteomes" id="UP000002157">
    <property type="component" value="Chromosome"/>
</dbReference>
<dbReference type="GO" id="GO:0005886">
    <property type="term" value="C:plasma membrane"/>
    <property type="evidence" value="ECO:0007669"/>
    <property type="project" value="UniProtKB-SubCell"/>
</dbReference>
<dbReference type="GO" id="GO:0015144">
    <property type="term" value="F:carbohydrate transmembrane transporter activity"/>
    <property type="evidence" value="ECO:0007669"/>
    <property type="project" value="UniProtKB-UniRule"/>
</dbReference>
<dbReference type="CDD" id="cd17324">
    <property type="entry name" value="MFS_NepI_like"/>
    <property type="match status" value="1"/>
</dbReference>
<dbReference type="Gene3D" id="1.20.1250.20">
    <property type="entry name" value="MFS general substrate transporter like domains"/>
    <property type="match status" value="1"/>
</dbReference>
<dbReference type="HAMAP" id="MF_00517">
    <property type="entry name" value="MFS_SotB"/>
    <property type="match status" value="1"/>
</dbReference>
<dbReference type="InterPro" id="IPR011701">
    <property type="entry name" value="MFS"/>
</dbReference>
<dbReference type="InterPro" id="IPR020846">
    <property type="entry name" value="MFS_dom"/>
</dbReference>
<dbReference type="InterPro" id="IPR050189">
    <property type="entry name" value="MFS_Efflux_Transporters"/>
</dbReference>
<dbReference type="InterPro" id="IPR036259">
    <property type="entry name" value="MFS_trans_sf"/>
</dbReference>
<dbReference type="InterPro" id="IPR023495">
    <property type="entry name" value="Sugar_effux_transptr_put"/>
</dbReference>
<dbReference type="NCBIfam" id="NF002921">
    <property type="entry name" value="PRK03545.1"/>
    <property type="match status" value="1"/>
</dbReference>
<dbReference type="PANTHER" id="PTHR43124">
    <property type="entry name" value="PURINE EFFLUX PUMP PBUE"/>
    <property type="match status" value="1"/>
</dbReference>
<dbReference type="PANTHER" id="PTHR43124:SF4">
    <property type="entry name" value="SUGAR EFFLUX TRANSPORTER"/>
    <property type="match status" value="1"/>
</dbReference>
<dbReference type="Pfam" id="PF07690">
    <property type="entry name" value="MFS_1"/>
    <property type="match status" value="1"/>
</dbReference>
<dbReference type="SUPFAM" id="SSF103473">
    <property type="entry name" value="MFS general substrate transporter"/>
    <property type="match status" value="1"/>
</dbReference>
<dbReference type="PROSITE" id="PS50850">
    <property type="entry name" value="MFS"/>
    <property type="match status" value="1"/>
</dbReference>
<evidence type="ECO:0000255" key="1">
    <source>
        <dbReference type="HAMAP-Rule" id="MF_00517"/>
    </source>
</evidence>
<keyword id="KW-0997">Cell inner membrane</keyword>
<keyword id="KW-1003">Cell membrane</keyword>
<keyword id="KW-0472">Membrane</keyword>
<keyword id="KW-0762">Sugar transport</keyword>
<keyword id="KW-0812">Transmembrane</keyword>
<keyword id="KW-1133">Transmembrane helix</keyword>
<keyword id="KW-0813">Transport</keyword>
<accession>B0KLJ7</accession>
<feature type="chain" id="PRO_1000081640" description="Probable sugar efflux transporter">
    <location>
        <begin position="1"/>
        <end position="399"/>
    </location>
</feature>
<feature type="transmembrane region" description="Helical" evidence="1">
    <location>
        <begin position="9"/>
        <end position="31"/>
    </location>
</feature>
<feature type="transmembrane region" description="Helical" evidence="1">
    <location>
        <begin position="56"/>
        <end position="76"/>
    </location>
</feature>
<feature type="transmembrane region" description="Helical" evidence="1">
    <location>
        <begin position="87"/>
        <end position="107"/>
    </location>
</feature>
<feature type="transmembrane region" description="Helical" evidence="1">
    <location>
        <begin position="108"/>
        <end position="128"/>
    </location>
</feature>
<feature type="transmembrane region" description="Helical" evidence="1">
    <location>
        <begin position="142"/>
        <end position="162"/>
    </location>
</feature>
<feature type="transmembrane region" description="Helical" evidence="1">
    <location>
        <begin position="174"/>
        <end position="194"/>
    </location>
</feature>
<feature type="transmembrane region" description="Helical" evidence="1">
    <location>
        <begin position="215"/>
        <end position="235"/>
    </location>
</feature>
<feature type="transmembrane region" description="Helical" evidence="1">
    <location>
        <begin position="254"/>
        <end position="274"/>
    </location>
</feature>
<feature type="transmembrane region" description="Helical" evidence="1">
    <location>
        <begin position="281"/>
        <end position="301"/>
    </location>
</feature>
<feature type="transmembrane region" description="Helical" evidence="1">
    <location>
        <begin position="304"/>
        <end position="324"/>
    </location>
</feature>
<feature type="transmembrane region" description="Helical" evidence="1">
    <location>
        <begin position="339"/>
        <end position="359"/>
    </location>
</feature>
<feature type="transmembrane region" description="Helical" evidence="1">
    <location>
        <begin position="368"/>
        <end position="388"/>
    </location>
</feature>
<comment type="function">
    <text evidence="1">Involved in the efflux of sugars. The physiological role may be the reduction of the intracellular concentration of toxic sugars or sugar metabolites.</text>
</comment>
<comment type="subcellular location">
    <subcellularLocation>
        <location evidence="1">Cell inner membrane</location>
        <topology evidence="1">Multi-pass membrane protein</topology>
    </subcellularLocation>
</comment>
<comment type="similarity">
    <text evidence="1">Belongs to the major facilitator superfamily. SotB (TC 2.A.1.2) family.</text>
</comment>
<protein>
    <recommendedName>
        <fullName evidence="1">Probable sugar efflux transporter</fullName>
    </recommendedName>
</protein>
<organism>
    <name type="scientific">Pseudomonas putida (strain GB-1)</name>
    <dbReference type="NCBI Taxonomy" id="76869"/>
    <lineage>
        <taxon>Bacteria</taxon>
        <taxon>Pseudomonadati</taxon>
        <taxon>Pseudomonadota</taxon>
        <taxon>Gammaproteobacteria</taxon>
        <taxon>Pseudomonadales</taxon>
        <taxon>Pseudomonadaceae</taxon>
        <taxon>Pseudomonas</taxon>
    </lineage>
</organism>
<reference key="1">
    <citation type="submission" date="2008-01" db="EMBL/GenBank/DDBJ databases">
        <title>Complete sequence of Pseudomonas putida GB-1.</title>
        <authorList>
            <consortium name="US DOE Joint Genome Institute"/>
            <person name="Copeland A."/>
            <person name="Lucas S."/>
            <person name="Lapidus A."/>
            <person name="Barry K."/>
            <person name="Glavina del Rio T."/>
            <person name="Dalin E."/>
            <person name="Tice H."/>
            <person name="Pitluck S."/>
            <person name="Bruce D."/>
            <person name="Goodwin L."/>
            <person name="Chertkov O."/>
            <person name="Brettin T."/>
            <person name="Detter J.C."/>
            <person name="Han C."/>
            <person name="Kuske C.R."/>
            <person name="Schmutz J."/>
            <person name="Larimer F."/>
            <person name="Land M."/>
            <person name="Hauser L."/>
            <person name="Kyrpides N."/>
            <person name="Kim E."/>
            <person name="McCarthy J.K."/>
            <person name="Richardson P."/>
        </authorList>
    </citation>
    <scope>NUCLEOTIDE SEQUENCE [LARGE SCALE GENOMIC DNA]</scope>
    <source>
        <strain>GB-1</strain>
    </source>
</reference>
<sequence>MNGPTPTHISPATGSGSWLSVIALALAAFIFNTTEFVPVALLSDIGRSFDMSTAQVGLMLTIYAWVVALASLPMMLLTRNIERRRLLLFVFLVFIVSHLLSWLSQSFAMLLVSRIGIALAHAVFWAITASLAVRVAPPGQQAKALGLLATGTTLAMVLGIPLGRVVGEALGWRITFLSIAGVALATMLCLMKSLPLLPSQNSGSLRSLPILFKRPALVITYLLVTLVITAQFTAYSYIEPFALHVAQIGGERTTLVLLLFGGAGVFGSLLFSRYSDRFPHGFLVGSIGLLAACLLLLLPLSGNFYAFAALSMFWGVAILSFSLSLQSKTLKLASDATDVAMALFSGIYNIGIGGGALLGSIVSSQMDVANIGLVGGSVAVVGLVLAVASTRRFREALTR</sequence>